<protein>
    <recommendedName>
        <fullName evidence="1">Phosphoenolpyruvate transferase</fullName>
        <ecNumber evidence="1">2.7.8.28</ecNumber>
    </recommendedName>
    <alternativeName>
        <fullName evidence="1">EPPG:FO PEP transferase</fullName>
    </alternativeName>
</protein>
<sequence length="329" mass="35365">MKLTVLVGGVGGARFLLGAQRLLGLGQFATPDDNARHELTAVVNIGDDAWIHGLRICPDLDTCMYTLGGGVDPQRGWGHRDETWHAKEELARYGVQPDWFQLGDRDLATHLVRTQMLRAGYPLAQITTALCDRWQPGATLLPVSNDRCETHVVVTDPTDQQQRAIHFQEWWVRYRAELPTHSFAFIGTETASATTEVTAAIADADVVMLAPSNPVVSIGAILAVPGIRAALRATRAPIIGYSPIIAGKPVRGMADACLSVIGVDTTAEAVGRHYGARAATGVLDYWLVAEGDQAEIDSVTVRSIPLLMSDPEATAQMVRAGLELAGVTV</sequence>
<proteinExistence type="inferred from homology"/>
<evidence type="ECO:0000255" key="1">
    <source>
        <dbReference type="HAMAP-Rule" id="MF_01257"/>
    </source>
</evidence>
<comment type="function">
    <text evidence="1">Catalyzes the transfer of the phosphoenolpyruvate moiety from enoylpyruvoyl-2-diphospho-5'-guanosine (EPPG) to 7,8-didemethyl-8-hydroxy-5-deazariboflavin (FO) with the formation of dehydro coenzyme F420-0 and GMP.</text>
</comment>
<comment type="catalytic activity">
    <reaction evidence="1">
        <text>enolpyruvoyl-2-diphospho-5'-guanosine + 7,8-didemethyl-8-hydroxy-5-deazariboflavin = dehydro coenzyme F420-0 + GMP + H(+)</text>
        <dbReference type="Rhea" id="RHEA:27510"/>
        <dbReference type="ChEBI" id="CHEBI:15378"/>
        <dbReference type="ChEBI" id="CHEBI:58115"/>
        <dbReference type="ChEBI" id="CHEBI:59904"/>
        <dbReference type="ChEBI" id="CHEBI:143701"/>
        <dbReference type="ChEBI" id="CHEBI:143705"/>
        <dbReference type="EC" id="2.7.8.28"/>
    </reaction>
</comment>
<comment type="cofactor">
    <cofactor evidence="1">
        <name>Mg(2+)</name>
        <dbReference type="ChEBI" id="CHEBI:18420"/>
    </cofactor>
</comment>
<comment type="pathway">
    <text evidence="1">Cofactor biosynthesis; coenzyme F420 biosynthesis.</text>
</comment>
<comment type="subunit">
    <text evidence="1">Homodimer.</text>
</comment>
<comment type="similarity">
    <text evidence="1">Belongs to the CofD family.</text>
</comment>
<organism>
    <name type="scientific">Mycobacterium ulcerans (strain Agy99)</name>
    <dbReference type="NCBI Taxonomy" id="362242"/>
    <lineage>
        <taxon>Bacteria</taxon>
        <taxon>Bacillati</taxon>
        <taxon>Actinomycetota</taxon>
        <taxon>Actinomycetes</taxon>
        <taxon>Mycobacteriales</taxon>
        <taxon>Mycobacteriaceae</taxon>
        <taxon>Mycobacterium</taxon>
        <taxon>Mycobacterium ulcerans group</taxon>
    </lineage>
</organism>
<dbReference type="EC" id="2.7.8.28" evidence="1"/>
<dbReference type="EMBL" id="CP000325">
    <property type="protein sequence ID" value="ABL04937.1"/>
    <property type="molecule type" value="Genomic_DNA"/>
</dbReference>
<dbReference type="SMR" id="A0PRG8"/>
<dbReference type="KEGG" id="mul:MUL_2606"/>
<dbReference type="eggNOG" id="COG0391">
    <property type="taxonomic scope" value="Bacteria"/>
</dbReference>
<dbReference type="HOGENOM" id="CLU_055795_0_0_11"/>
<dbReference type="UniPathway" id="UPA00071"/>
<dbReference type="Proteomes" id="UP000000765">
    <property type="component" value="Chromosome"/>
</dbReference>
<dbReference type="GO" id="GO:0043743">
    <property type="term" value="F:LPPG:FO 2-phospho-L-lactate transferase activity"/>
    <property type="evidence" value="ECO:0007669"/>
    <property type="project" value="UniProtKB-EC"/>
</dbReference>
<dbReference type="GO" id="GO:0000287">
    <property type="term" value="F:magnesium ion binding"/>
    <property type="evidence" value="ECO:0007669"/>
    <property type="project" value="InterPro"/>
</dbReference>
<dbReference type="GO" id="GO:0052645">
    <property type="term" value="P:F420-0 metabolic process"/>
    <property type="evidence" value="ECO:0007669"/>
    <property type="project" value="UniProtKB-UniRule"/>
</dbReference>
<dbReference type="CDD" id="cd07186">
    <property type="entry name" value="CofD_like"/>
    <property type="match status" value="1"/>
</dbReference>
<dbReference type="FunFam" id="1.10.8.240:FF:000001">
    <property type="entry name" value="2-phospho-L-lactate transferase"/>
    <property type="match status" value="1"/>
</dbReference>
<dbReference type="Gene3D" id="1.10.8.240">
    <property type="entry name" value="CofD-like domain"/>
    <property type="match status" value="1"/>
</dbReference>
<dbReference type="Gene3D" id="3.40.50.10680">
    <property type="entry name" value="CofD-like domains"/>
    <property type="match status" value="1"/>
</dbReference>
<dbReference type="HAMAP" id="MF_01257">
    <property type="entry name" value="CofD"/>
    <property type="match status" value="1"/>
</dbReference>
<dbReference type="InterPro" id="IPR002882">
    <property type="entry name" value="CofD"/>
</dbReference>
<dbReference type="InterPro" id="IPR038136">
    <property type="entry name" value="CofD-like_dom_sf"/>
</dbReference>
<dbReference type="InterPro" id="IPR010115">
    <property type="entry name" value="FbiA/CofD"/>
</dbReference>
<dbReference type="NCBIfam" id="TIGR01819">
    <property type="entry name" value="F420_cofD"/>
    <property type="match status" value="1"/>
</dbReference>
<dbReference type="PANTHER" id="PTHR43007">
    <property type="entry name" value="2-PHOSPHO-L-LACTATE TRANSFERASE"/>
    <property type="match status" value="1"/>
</dbReference>
<dbReference type="PANTHER" id="PTHR43007:SF1">
    <property type="entry name" value="2-PHOSPHO-L-LACTATE TRANSFERASE"/>
    <property type="match status" value="1"/>
</dbReference>
<dbReference type="Pfam" id="PF01933">
    <property type="entry name" value="CofD"/>
    <property type="match status" value="1"/>
</dbReference>
<dbReference type="SUPFAM" id="SSF142338">
    <property type="entry name" value="CofD-like"/>
    <property type="match status" value="1"/>
</dbReference>
<gene>
    <name evidence="1" type="primary">fbiA</name>
    <name type="ordered locus">MUL_2606</name>
</gene>
<accession>A0PRG8</accession>
<keyword id="KW-0460">Magnesium</keyword>
<keyword id="KW-0808">Transferase</keyword>
<reference key="1">
    <citation type="journal article" date="2007" name="Genome Res.">
        <title>Reductive evolution and niche adaptation inferred from the genome of Mycobacterium ulcerans, the causative agent of Buruli ulcer.</title>
        <authorList>
            <person name="Stinear T.P."/>
            <person name="Seemann T."/>
            <person name="Pidot S."/>
            <person name="Frigui W."/>
            <person name="Reysset G."/>
            <person name="Garnier T."/>
            <person name="Meurice G."/>
            <person name="Simon D."/>
            <person name="Bouchier C."/>
            <person name="Ma L."/>
            <person name="Tichit M."/>
            <person name="Porter J.L."/>
            <person name="Ryan J."/>
            <person name="Johnson P.D.R."/>
            <person name="Davies J.K."/>
            <person name="Jenkin G.A."/>
            <person name="Small P.L.C."/>
            <person name="Jones L.M."/>
            <person name="Tekaia F."/>
            <person name="Laval F."/>
            <person name="Daffe M."/>
            <person name="Parkhill J."/>
            <person name="Cole S.T."/>
        </authorList>
    </citation>
    <scope>NUCLEOTIDE SEQUENCE [LARGE SCALE GENOMIC DNA]</scope>
    <source>
        <strain>Agy99</strain>
    </source>
</reference>
<feature type="chain" id="PRO_1000067256" description="Phosphoenolpyruvate transferase">
    <location>
        <begin position="1"/>
        <end position="329"/>
    </location>
</feature>
<feature type="binding site" evidence="1">
    <location>
        <position position="61"/>
    </location>
    <ligand>
        <name>7,8-didemethyl-8-hydroxy-5-deazariboflavin</name>
        <dbReference type="ChEBI" id="CHEBI:59904"/>
    </ligand>
</feature>
<name>FBIA_MYCUA</name>